<dbReference type="EMBL" id="D87899">
    <property type="protein sequence ID" value="BAA13491.1"/>
    <property type="molecule type" value="mRNA"/>
</dbReference>
<dbReference type="EMBL" id="AK031259">
    <property type="protein sequence ID" value="BAC27325.1"/>
    <property type="molecule type" value="mRNA"/>
</dbReference>
<dbReference type="EMBL" id="AK042977">
    <property type="protein sequence ID" value="BAC31426.1"/>
    <property type="molecule type" value="mRNA"/>
</dbReference>
<dbReference type="EMBL" id="AK053123">
    <property type="protein sequence ID" value="BAC35273.1"/>
    <property type="molecule type" value="mRNA"/>
</dbReference>
<dbReference type="EMBL" id="AK077591">
    <property type="protein sequence ID" value="BAC36882.1"/>
    <property type="molecule type" value="mRNA"/>
</dbReference>
<dbReference type="EMBL" id="AK167133">
    <property type="protein sequence ID" value="BAE39279.1"/>
    <property type="molecule type" value="mRNA"/>
</dbReference>
<dbReference type="EMBL" id="AK167601">
    <property type="protein sequence ID" value="BAE39658.1"/>
    <property type="molecule type" value="mRNA"/>
</dbReference>
<dbReference type="EMBL" id="AK167653">
    <property type="protein sequence ID" value="BAE39704.1"/>
    <property type="molecule type" value="mRNA"/>
</dbReference>
<dbReference type="EMBL" id="AK169094">
    <property type="protein sequence ID" value="BAE40877.1"/>
    <property type="molecule type" value="mRNA"/>
</dbReference>
<dbReference type="EMBL" id="AK169412">
    <property type="protein sequence ID" value="BAE41158.1"/>
    <property type="molecule type" value="mRNA"/>
</dbReference>
<dbReference type="EMBL" id="BC010487">
    <property type="protein sequence ID" value="AAH10487.1"/>
    <property type="molecule type" value="mRNA"/>
</dbReference>
<dbReference type="CCDS" id="CCDS25525.1"/>
<dbReference type="PIR" id="JC4946">
    <property type="entry name" value="JC4946"/>
</dbReference>
<dbReference type="RefSeq" id="NP_001291503.1">
    <property type="nucleotide sequence ID" value="NM_001304574.1"/>
</dbReference>
<dbReference type="RefSeq" id="NP_031503.1">
    <property type="nucleotide sequence ID" value="NM_007477.5"/>
</dbReference>
<dbReference type="PDB" id="1J2J">
    <property type="method" value="X-ray"/>
    <property type="resolution" value="1.60 A"/>
    <property type="chains" value="A=18-181"/>
</dbReference>
<dbReference type="PDBsum" id="1J2J"/>
<dbReference type="SMR" id="Q8BSL7"/>
<dbReference type="BioGRID" id="198185">
    <property type="interactions" value="33"/>
</dbReference>
<dbReference type="FunCoup" id="Q8BSL7">
    <property type="interactions" value="1570"/>
</dbReference>
<dbReference type="IntAct" id="Q8BSL7">
    <property type="interactions" value="1"/>
</dbReference>
<dbReference type="STRING" id="10090.ENSMUSP00000102622"/>
<dbReference type="GlyGen" id="Q8BSL7">
    <property type="glycosylation" value="1 site, 1 O-linked glycan (1 site)"/>
</dbReference>
<dbReference type="iPTMnet" id="Q8BSL7"/>
<dbReference type="PhosphoSitePlus" id="Q8BSL7"/>
<dbReference type="SwissPalm" id="Q8BSL7"/>
<dbReference type="jPOST" id="Q8BSL7"/>
<dbReference type="PaxDb" id="10090-ENSMUSP00000102622"/>
<dbReference type="PeptideAtlas" id="Q8BSL7"/>
<dbReference type="ProteomicsDB" id="277272"/>
<dbReference type="Pumba" id="Q8BSL7"/>
<dbReference type="DNASU" id="11841"/>
<dbReference type="Ensembl" id="ENSMUST00000057921.10">
    <property type="protein sequence ID" value="ENSMUSP00000051814.4"/>
    <property type="gene ID" value="ENSMUSG00000062421.14"/>
</dbReference>
<dbReference type="Ensembl" id="ENSMUST00000063347.12">
    <property type="protein sequence ID" value="ENSMUSP00000102622.3"/>
    <property type="gene ID" value="ENSMUSG00000062421.14"/>
</dbReference>
<dbReference type="GeneID" id="11841"/>
<dbReference type="KEGG" id="mmu:11841"/>
<dbReference type="UCSC" id="uc007lvx.2">
    <property type="organism name" value="mouse"/>
</dbReference>
<dbReference type="AGR" id="MGI:99595"/>
<dbReference type="CTD" id="11841"/>
<dbReference type="MGI" id="MGI:99595">
    <property type="gene designation" value="Arf2"/>
</dbReference>
<dbReference type="VEuPathDB" id="HostDB:ENSMUSG00000062421"/>
<dbReference type="eggNOG" id="KOG0070">
    <property type="taxonomic scope" value="Eukaryota"/>
</dbReference>
<dbReference type="GeneTree" id="ENSGT00950000183080"/>
<dbReference type="HOGENOM" id="CLU_040729_9_3_1"/>
<dbReference type="InParanoid" id="Q8BSL7"/>
<dbReference type="OMA" id="KEIRILX"/>
<dbReference type="OrthoDB" id="2011769at2759"/>
<dbReference type="PhylomeDB" id="Q8BSL7"/>
<dbReference type="TreeFam" id="TF300808"/>
<dbReference type="BioGRID-ORCS" id="11841">
    <property type="hits" value="1 hit in 62 CRISPR screens"/>
</dbReference>
<dbReference type="ChiTaRS" id="Arf2">
    <property type="organism name" value="mouse"/>
</dbReference>
<dbReference type="PRO" id="PR:Q8BSL7"/>
<dbReference type="Proteomes" id="UP000000589">
    <property type="component" value="Chromosome 11"/>
</dbReference>
<dbReference type="RNAct" id="Q8BSL7">
    <property type="molecule type" value="protein"/>
</dbReference>
<dbReference type="Bgee" id="ENSMUSG00000062421">
    <property type="expression patterns" value="Expressed in placenta labyrinth and 254 other cell types or tissues"/>
</dbReference>
<dbReference type="ExpressionAtlas" id="Q8BSL7">
    <property type="expression patterns" value="baseline and differential"/>
</dbReference>
<dbReference type="GO" id="GO:0005794">
    <property type="term" value="C:Golgi apparatus"/>
    <property type="evidence" value="ECO:0000314"/>
    <property type="project" value="MGI"/>
</dbReference>
<dbReference type="GO" id="GO:0005525">
    <property type="term" value="F:GTP binding"/>
    <property type="evidence" value="ECO:0000304"/>
    <property type="project" value="MGI"/>
</dbReference>
<dbReference type="GO" id="GO:0003924">
    <property type="term" value="F:GTPase activity"/>
    <property type="evidence" value="ECO:0007669"/>
    <property type="project" value="InterPro"/>
</dbReference>
<dbReference type="GO" id="GO:0015031">
    <property type="term" value="P:protein transport"/>
    <property type="evidence" value="ECO:0000304"/>
    <property type="project" value="MGI"/>
</dbReference>
<dbReference type="GO" id="GO:0016192">
    <property type="term" value="P:vesicle-mediated transport"/>
    <property type="evidence" value="ECO:0007669"/>
    <property type="project" value="UniProtKB-KW"/>
</dbReference>
<dbReference type="CDD" id="cd04150">
    <property type="entry name" value="Arf1_5_like"/>
    <property type="match status" value="1"/>
</dbReference>
<dbReference type="FunFam" id="3.40.50.300:FF:003500">
    <property type="entry name" value="ADP-ribosylation factor 1"/>
    <property type="match status" value="1"/>
</dbReference>
<dbReference type="Gene3D" id="3.40.50.300">
    <property type="entry name" value="P-loop containing nucleotide triphosphate hydrolases"/>
    <property type="match status" value="1"/>
</dbReference>
<dbReference type="InterPro" id="IPR045872">
    <property type="entry name" value="Arf1-5-like"/>
</dbReference>
<dbReference type="InterPro" id="IPR027417">
    <property type="entry name" value="P-loop_NTPase"/>
</dbReference>
<dbReference type="InterPro" id="IPR005225">
    <property type="entry name" value="Small_GTP-bd"/>
</dbReference>
<dbReference type="InterPro" id="IPR024156">
    <property type="entry name" value="Small_GTPase_ARF"/>
</dbReference>
<dbReference type="InterPro" id="IPR006689">
    <property type="entry name" value="Small_GTPase_ARF/SAR"/>
</dbReference>
<dbReference type="NCBIfam" id="TIGR00231">
    <property type="entry name" value="small_GTP"/>
    <property type="match status" value="1"/>
</dbReference>
<dbReference type="PANTHER" id="PTHR11711">
    <property type="entry name" value="ADP RIBOSYLATION FACTOR-RELATED"/>
    <property type="match status" value="1"/>
</dbReference>
<dbReference type="Pfam" id="PF00025">
    <property type="entry name" value="Arf"/>
    <property type="match status" value="1"/>
</dbReference>
<dbReference type="PRINTS" id="PR00328">
    <property type="entry name" value="SAR1GTPBP"/>
</dbReference>
<dbReference type="SMART" id="SM00177">
    <property type="entry name" value="ARF"/>
    <property type="match status" value="1"/>
</dbReference>
<dbReference type="SMART" id="SM00175">
    <property type="entry name" value="RAB"/>
    <property type="match status" value="1"/>
</dbReference>
<dbReference type="SMART" id="SM00178">
    <property type="entry name" value="SAR"/>
    <property type="match status" value="1"/>
</dbReference>
<dbReference type="SUPFAM" id="SSF52540">
    <property type="entry name" value="P-loop containing nucleoside triphosphate hydrolases"/>
    <property type="match status" value="1"/>
</dbReference>
<dbReference type="PROSITE" id="PS51417">
    <property type="entry name" value="ARF"/>
    <property type="match status" value="1"/>
</dbReference>
<feature type="initiator methionine" description="Removed" evidence="2">
    <location>
        <position position="1"/>
    </location>
</feature>
<feature type="chain" id="PRO_0000207384" description="ADP-ribosylation factor 2">
    <location>
        <begin position="2"/>
        <end position="181"/>
    </location>
</feature>
<feature type="binding site" evidence="1">
    <location>
        <begin position="24"/>
        <end position="31"/>
    </location>
    <ligand>
        <name>GTP</name>
        <dbReference type="ChEBI" id="CHEBI:37565"/>
    </ligand>
</feature>
<feature type="binding site" evidence="1">
    <location>
        <begin position="67"/>
        <end position="71"/>
    </location>
    <ligand>
        <name>GTP</name>
        <dbReference type="ChEBI" id="CHEBI:37565"/>
    </ligand>
</feature>
<feature type="binding site" evidence="1">
    <location>
        <begin position="126"/>
        <end position="129"/>
    </location>
    <ligand>
        <name>GTP</name>
        <dbReference type="ChEBI" id="CHEBI:37565"/>
    </ligand>
</feature>
<feature type="lipid moiety-binding region" description="N-myristoyl glycine" evidence="2">
    <location>
        <position position="2"/>
    </location>
</feature>
<feature type="sequence conflict" description="In Ref. 3; AAH10487." evidence="3" ref="3">
    <original>ET</original>
    <variation>GH</variation>
    <location>
        <begin position="54"/>
        <end position="55"/>
    </location>
</feature>
<feature type="sequence conflict" description="In Ref. 2; BAC27325." evidence="3" ref="2">
    <original>Y</original>
    <variation>N</variation>
    <location>
        <position position="154"/>
    </location>
</feature>
<feature type="strand" evidence="4">
    <location>
        <begin position="18"/>
        <end position="23"/>
    </location>
</feature>
<feature type="helix" evidence="4">
    <location>
        <begin position="30"/>
        <end position="39"/>
    </location>
</feature>
<feature type="strand" evidence="4">
    <location>
        <begin position="49"/>
        <end position="58"/>
    </location>
</feature>
<feature type="strand" evidence="4">
    <location>
        <begin position="61"/>
        <end position="68"/>
    </location>
</feature>
<feature type="helix" evidence="4">
    <location>
        <begin position="72"/>
        <end position="81"/>
    </location>
</feature>
<feature type="strand" evidence="4">
    <location>
        <begin position="87"/>
        <end position="93"/>
    </location>
</feature>
<feature type="helix" evidence="4">
    <location>
        <begin position="97"/>
        <end position="99"/>
    </location>
</feature>
<feature type="helix" evidence="4">
    <location>
        <begin position="100"/>
        <end position="111"/>
    </location>
</feature>
<feature type="helix" evidence="4">
    <location>
        <begin position="114"/>
        <end position="116"/>
    </location>
</feature>
<feature type="strand" evidence="4">
    <location>
        <begin position="120"/>
        <end position="126"/>
    </location>
</feature>
<feature type="helix" evidence="4">
    <location>
        <begin position="136"/>
        <end position="143"/>
    </location>
</feature>
<feature type="helix" evidence="4">
    <location>
        <begin position="145"/>
        <end position="147"/>
    </location>
</feature>
<feature type="strand" evidence="4">
    <location>
        <begin position="153"/>
        <end position="157"/>
    </location>
</feature>
<feature type="turn" evidence="4">
    <location>
        <begin position="160"/>
        <end position="163"/>
    </location>
</feature>
<feature type="helix" evidence="4">
    <location>
        <begin position="166"/>
        <end position="178"/>
    </location>
</feature>
<evidence type="ECO:0000250" key="1"/>
<evidence type="ECO:0000255" key="2"/>
<evidence type="ECO:0000305" key="3"/>
<evidence type="ECO:0007829" key="4">
    <source>
        <dbReference type="PDB" id="1J2J"/>
    </source>
</evidence>
<organism>
    <name type="scientific">Mus musculus</name>
    <name type="common">Mouse</name>
    <dbReference type="NCBI Taxonomy" id="10090"/>
    <lineage>
        <taxon>Eukaryota</taxon>
        <taxon>Metazoa</taxon>
        <taxon>Chordata</taxon>
        <taxon>Craniata</taxon>
        <taxon>Vertebrata</taxon>
        <taxon>Euteleostomi</taxon>
        <taxon>Mammalia</taxon>
        <taxon>Eutheria</taxon>
        <taxon>Euarchontoglires</taxon>
        <taxon>Glires</taxon>
        <taxon>Rodentia</taxon>
        <taxon>Myomorpha</taxon>
        <taxon>Muroidea</taxon>
        <taxon>Muridae</taxon>
        <taxon>Murinae</taxon>
        <taxon>Mus</taxon>
        <taxon>Mus</taxon>
    </lineage>
</organism>
<accession>Q8BSL7</accession>
<accession>P10947</accession>
<accession>P16500</accession>
<accession>Q3TJ37</accession>
<accession>Q91VR9</accession>
<keyword id="KW-0002">3D-structure</keyword>
<keyword id="KW-0903">Direct protein sequencing</keyword>
<keyword id="KW-0931">ER-Golgi transport</keyword>
<keyword id="KW-0333">Golgi apparatus</keyword>
<keyword id="KW-0342">GTP-binding</keyword>
<keyword id="KW-0449">Lipoprotein</keyword>
<keyword id="KW-0519">Myristate</keyword>
<keyword id="KW-0547">Nucleotide-binding</keyword>
<keyword id="KW-0653">Protein transport</keyword>
<keyword id="KW-1185">Reference proteome</keyword>
<keyword id="KW-0813">Transport</keyword>
<name>ARF2_MOUSE</name>
<proteinExistence type="evidence at protein level"/>
<sequence>MGNVFEKLFKSLFGKKEMRILMVGLDAAGKTTILYKLKLGEIVTTIPTIGFNVETVEYKNISFTVWDVGGQDKIRPLWRHYFQNTQGLIFVVDSNDRERVNEAREELTRMLAEDELRDAVLLVFVNKQDLPNAMNAAEITDKLGLHSLRQRNWYIQATCATSGDGLYEGLDWLSNQLKNQK</sequence>
<comment type="function">
    <text>GTP-binding protein that functions as an allosteric activator of the cholera toxin catalytic subunit, an ADP-ribosyltransferase. Involved in protein trafficking; may modulate vesicle budding and uncoating within the Golgi apparatus.</text>
</comment>
<comment type="subcellular location">
    <subcellularLocation>
        <location>Golgi apparatus</location>
    </subcellularLocation>
</comment>
<comment type="similarity">
    <text evidence="3">Belongs to the small GTPase superfamily. Arf family.</text>
</comment>
<protein>
    <recommendedName>
        <fullName>ADP-ribosylation factor 2</fullName>
    </recommendedName>
</protein>
<gene>
    <name type="primary">Arf2</name>
</gene>
<reference key="1">
    <citation type="journal article" date="1996" name="J. Biochem.">
        <title>Structure and intracellular localization of mouse ADP-ribosylation factors type 1 to type 6 (ARF1-ARF6).</title>
        <authorList>
            <person name="Hosaka M."/>
            <person name="Toda K."/>
            <person name="Takatsu H."/>
            <person name="Torii S."/>
            <person name="Murakami K."/>
            <person name="Nakayama K."/>
        </authorList>
    </citation>
    <scope>NUCLEOTIDE SEQUENCE [MRNA]</scope>
    <source>
        <strain>ICR</strain>
        <tissue>Brain</tissue>
    </source>
</reference>
<reference key="2">
    <citation type="journal article" date="2005" name="Science">
        <title>The transcriptional landscape of the mammalian genome.</title>
        <authorList>
            <person name="Carninci P."/>
            <person name="Kasukawa T."/>
            <person name="Katayama S."/>
            <person name="Gough J."/>
            <person name="Frith M.C."/>
            <person name="Maeda N."/>
            <person name="Oyama R."/>
            <person name="Ravasi T."/>
            <person name="Lenhard B."/>
            <person name="Wells C."/>
            <person name="Kodzius R."/>
            <person name="Shimokawa K."/>
            <person name="Bajic V.B."/>
            <person name="Brenner S.E."/>
            <person name="Batalov S."/>
            <person name="Forrest A.R."/>
            <person name="Zavolan M."/>
            <person name="Davis M.J."/>
            <person name="Wilming L.G."/>
            <person name="Aidinis V."/>
            <person name="Allen J.E."/>
            <person name="Ambesi-Impiombato A."/>
            <person name="Apweiler R."/>
            <person name="Aturaliya R.N."/>
            <person name="Bailey T.L."/>
            <person name="Bansal M."/>
            <person name="Baxter L."/>
            <person name="Beisel K.W."/>
            <person name="Bersano T."/>
            <person name="Bono H."/>
            <person name="Chalk A.M."/>
            <person name="Chiu K.P."/>
            <person name="Choudhary V."/>
            <person name="Christoffels A."/>
            <person name="Clutterbuck D.R."/>
            <person name="Crowe M.L."/>
            <person name="Dalla E."/>
            <person name="Dalrymple B.P."/>
            <person name="de Bono B."/>
            <person name="Della Gatta G."/>
            <person name="di Bernardo D."/>
            <person name="Down T."/>
            <person name="Engstrom P."/>
            <person name="Fagiolini M."/>
            <person name="Faulkner G."/>
            <person name="Fletcher C.F."/>
            <person name="Fukushima T."/>
            <person name="Furuno M."/>
            <person name="Futaki S."/>
            <person name="Gariboldi M."/>
            <person name="Georgii-Hemming P."/>
            <person name="Gingeras T.R."/>
            <person name="Gojobori T."/>
            <person name="Green R.E."/>
            <person name="Gustincich S."/>
            <person name="Harbers M."/>
            <person name="Hayashi Y."/>
            <person name="Hensch T.K."/>
            <person name="Hirokawa N."/>
            <person name="Hill D."/>
            <person name="Huminiecki L."/>
            <person name="Iacono M."/>
            <person name="Ikeo K."/>
            <person name="Iwama A."/>
            <person name="Ishikawa T."/>
            <person name="Jakt M."/>
            <person name="Kanapin A."/>
            <person name="Katoh M."/>
            <person name="Kawasawa Y."/>
            <person name="Kelso J."/>
            <person name="Kitamura H."/>
            <person name="Kitano H."/>
            <person name="Kollias G."/>
            <person name="Krishnan S.P."/>
            <person name="Kruger A."/>
            <person name="Kummerfeld S.K."/>
            <person name="Kurochkin I.V."/>
            <person name="Lareau L.F."/>
            <person name="Lazarevic D."/>
            <person name="Lipovich L."/>
            <person name="Liu J."/>
            <person name="Liuni S."/>
            <person name="McWilliam S."/>
            <person name="Madan Babu M."/>
            <person name="Madera M."/>
            <person name="Marchionni L."/>
            <person name="Matsuda H."/>
            <person name="Matsuzawa S."/>
            <person name="Miki H."/>
            <person name="Mignone F."/>
            <person name="Miyake S."/>
            <person name="Morris K."/>
            <person name="Mottagui-Tabar S."/>
            <person name="Mulder N."/>
            <person name="Nakano N."/>
            <person name="Nakauchi H."/>
            <person name="Ng P."/>
            <person name="Nilsson R."/>
            <person name="Nishiguchi S."/>
            <person name="Nishikawa S."/>
            <person name="Nori F."/>
            <person name="Ohara O."/>
            <person name="Okazaki Y."/>
            <person name="Orlando V."/>
            <person name="Pang K.C."/>
            <person name="Pavan W.J."/>
            <person name="Pavesi G."/>
            <person name="Pesole G."/>
            <person name="Petrovsky N."/>
            <person name="Piazza S."/>
            <person name="Reed J."/>
            <person name="Reid J.F."/>
            <person name="Ring B.Z."/>
            <person name="Ringwald M."/>
            <person name="Rost B."/>
            <person name="Ruan Y."/>
            <person name="Salzberg S.L."/>
            <person name="Sandelin A."/>
            <person name="Schneider C."/>
            <person name="Schoenbach C."/>
            <person name="Sekiguchi K."/>
            <person name="Semple C.A."/>
            <person name="Seno S."/>
            <person name="Sessa L."/>
            <person name="Sheng Y."/>
            <person name="Shibata Y."/>
            <person name="Shimada H."/>
            <person name="Shimada K."/>
            <person name="Silva D."/>
            <person name="Sinclair B."/>
            <person name="Sperling S."/>
            <person name="Stupka E."/>
            <person name="Sugiura K."/>
            <person name="Sultana R."/>
            <person name="Takenaka Y."/>
            <person name="Taki K."/>
            <person name="Tammoja K."/>
            <person name="Tan S.L."/>
            <person name="Tang S."/>
            <person name="Taylor M.S."/>
            <person name="Tegner J."/>
            <person name="Teichmann S.A."/>
            <person name="Ueda H.R."/>
            <person name="van Nimwegen E."/>
            <person name="Verardo R."/>
            <person name="Wei C.L."/>
            <person name="Yagi K."/>
            <person name="Yamanishi H."/>
            <person name="Zabarovsky E."/>
            <person name="Zhu S."/>
            <person name="Zimmer A."/>
            <person name="Hide W."/>
            <person name="Bult C."/>
            <person name="Grimmond S.M."/>
            <person name="Teasdale R.D."/>
            <person name="Liu E.T."/>
            <person name="Brusic V."/>
            <person name="Quackenbush J."/>
            <person name="Wahlestedt C."/>
            <person name="Mattick J.S."/>
            <person name="Hume D.A."/>
            <person name="Kai C."/>
            <person name="Sasaki D."/>
            <person name="Tomaru Y."/>
            <person name="Fukuda S."/>
            <person name="Kanamori-Katayama M."/>
            <person name="Suzuki M."/>
            <person name="Aoki J."/>
            <person name="Arakawa T."/>
            <person name="Iida J."/>
            <person name="Imamura K."/>
            <person name="Itoh M."/>
            <person name="Kato T."/>
            <person name="Kawaji H."/>
            <person name="Kawagashira N."/>
            <person name="Kawashima T."/>
            <person name="Kojima M."/>
            <person name="Kondo S."/>
            <person name="Konno H."/>
            <person name="Nakano K."/>
            <person name="Ninomiya N."/>
            <person name="Nishio T."/>
            <person name="Okada M."/>
            <person name="Plessy C."/>
            <person name="Shibata K."/>
            <person name="Shiraki T."/>
            <person name="Suzuki S."/>
            <person name="Tagami M."/>
            <person name="Waki K."/>
            <person name="Watahiki A."/>
            <person name="Okamura-Oho Y."/>
            <person name="Suzuki H."/>
            <person name="Kawai J."/>
            <person name="Hayashizaki Y."/>
        </authorList>
    </citation>
    <scope>NUCLEOTIDE SEQUENCE [LARGE SCALE MRNA]</scope>
    <source>
        <strain>C57BL/6J</strain>
        <tissue>Amnion</tissue>
        <tissue>Cerebellum</tissue>
        <tissue>Embryo</tissue>
        <tissue>Forelimb</tissue>
        <tissue>Heart</tissue>
        <tissue>Lung</tissue>
        <tissue>Placenta</tissue>
    </source>
</reference>
<reference key="3">
    <citation type="journal article" date="2004" name="Genome Res.">
        <title>The status, quality, and expansion of the NIH full-length cDNA project: the Mammalian Gene Collection (MGC).</title>
        <authorList>
            <consortium name="The MGC Project Team"/>
        </authorList>
    </citation>
    <scope>NUCLEOTIDE SEQUENCE [LARGE SCALE MRNA]</scope>
    <source>
        <tissue>Mammary gland</tissue>
    </source>
</reference>
<reference key="4">
    <citation type="submission" date="2007-03" db="UniProtKB">
        <authorList>
            <person name="Lubec G."/>
            <person name="Klug S."/>
        </authorList>
    </citation>
    <scope>PROTEIN SEQUENCE OF 39-59 AND 80-97</scope>
    <scope>IDENTIFICATION BY MASS SPECTROMETRY</scope>
    <source>
        <tissue>Hippocampus</tissue>
    </source>
</reference>
<reference key="5">
    <citation type="journal article" date="2010" name="Cell">
        <title>A tissue-specific atlas of mouse protein phosphorylation and expression.</title>
        <authorList>
            <person name="Huttlin E.L."/>
            <person name="Jedrychowski M.P."/>
            <person name="Elias J.E."/>
            <person name="Goswami T."/>
            <person name="Rad R."/>
            <person name="Beausoleil S.A."/>
            <person name="Villen J."/>
            <person name="Haas W."/>
            <person name="Sowa M.E."/>
            <person name="Gygi S.P."/>
        </authorList>
    </citation>
    <scope>IDENTIFICATION BY MASS SPECTROMETRY [LARGE SCALE ANALYSIS]</scope>
    <source>
        <tissue>Brain</tissue>
        <tissue>Brown adipose tissue</tissue>
        <tissue>Kidney</tissue>
        <tissue>Liver</tissue>
        <tissue>Lung</tissue>
        <tissue>Pancreas</tissue>
        <tissue>Spleen</tissue>
        <tissue>Testis</tissue>
    </source>
</reference>